<accession>P0DH82</accession>
<evidence type="ECO:0000250" key="1"/>
<evidence type="ECO:0000255" key="2"/>
<evidence type="ECO:0000256" key="3">
    <source>
        <dbReference type="SAM" id="MobiDB-lite"/>
    </source>
</evidence>
<evidence type="ECO:0000305" key="4"/>
<sequence>MKQDTEMGEATNGYIGTPGTVPVSHAGNDSGMRRMRTASILMRLTAMALCVTALVTMVTDKQTHYFNFASTTIVKTAEYTNVLALKVFVYTNGVIAGYSLLQALWTIVAKSSYSTSKARLWTTFFLDQFIVYVLIGVTGAATEVAYIAEKGESDVAWPKQCNNFGRFCSQVGASVIVCFVAILTLVFLAVLSAKQLFIHERPSRTTRKDGYYTSNQ</sequence>
<reference key="1">
    <citation type="journal article" date="2007" name="Proc. Natl. Acad. Sci. U.S.A.">
        <title>Gene organization of the liverwort Y chromosome reveals distinct sex chromosome evolution in a haploid system.</title>
        <authorList>
            <person name="Yamato K.T."/>
            <person name="Ishizaki K."/>
            <person name="Fujisawa M."/>
            <person name="Okada S."/>
            <person name="Nakayama S."/>
            <person name="Fujishita M."/>
            <person name="Bando H."/>
            <person name="Yodoya K."/>
            <person name="Hayashi K."/>
            <person name="Bando T."/>
            <person name="Hasumi A."/>
            <person name="Nishio T."/>
            <person name="Sakata R."/>
            <person name="Yamamoto M."/>
            <person name="Yamaki A."/>
            <person name="Kajikawa M."/>
            <person name="Yamano T."/>
            <person name="Nishide T."/>
            <person name="Choi S."/>
            <person name="Shimizu-Ueda Y."/>
            <person name="Hanajiri T."/>
            <person name="Sakaida M."/>
            <person name="Kohno K."/>
            <person name="Takenaka M."/>
            <person name="Yamaoka S."/>
            <person name="Kuriyama C."/>
            <person name="Kohzu Y."/>
            <person name="Nishida H."/>
            <person name="Brennicke A."/>
            <person name="Shin-i T."/>
            <person name="Kohara Y."/>
            <person name="Kohchi T."/>
            <person name="Fukuzawa H."/>
            <person name="Ohyama K."/>
        </authorList>
    </citation>
    <scope>NUCLEOTIDE SEQUENCE [LARGE SCALE MRNA]</scope>
    <source>
        <tissue>Reproductive system</tissue>
        <tissue>Thallus</tissue>
    </source>
</reference>
<reference key="2">
    <citation type="journal article" date="2014" name="Plant Physiol.">
        <title>Functional and evolutionary analysis of the CASPARIAN STRIP MEMBRANE DOMAIN PROTEIN family.</title>
        <authorList>
            <person name="Roppolo D."/>
            <person name="Boeckmann B."/>
            <person name="Pfister A."/>
            <person name="Boutet E."/>
            <person name="Rubio M.C."/>
            <person name="Denervaud-Tendon V."/>
            <person name="Vermeer J.E."/>
            <person name="Gheyselinck J."/>
            <person name="Xenarios I."/>
            <person name="Geldner N."/>
        </authorList>
    </citation>
    <scope>GENE FAMILY</scope>
    <scope>NOMENCLATURE</scope>
</reference>
<keyword id="KW-1003">Cell membrane</keyword>
<keyword id="KW-0472">Membrane</keyword>
<keyword id="KW-0812">Transmembrane</keyword>
<keyword id="KW-1133">Transmembrane helix</keyword>
<dbReference type="EMBL" id="BJ846456">
    <property type="status" value="NOT_ANNOTATED_CDS"/>
    <property type="molecule type" value="mRNA"/>
</dbReference>
<dbReference type="EMBL" id="BJ869584">
    <property type="status" value="NOT_ANNOTATED_CDS"/>
    <property type="molecule type" value="mRNA"/>
</dbReference>
<dbReference type="SMR" id="P0DH82"/>
<dbReference type="EnsemblPlants" id="Mp5g15430.1">
    <property type="protein sequence ID" value="Mp5g15430.1.cds"/>
    <property type="gene ID" value="Mp5g15430"/>
</dbReference>
<dbReference type="Gramene" id="Mp5g15430.1">
    <property type="protein sequence ID" value="Mp5g15430.1.cds"/>
    <property type="gene ID" value="Mp5g15430"/>
</dbReference>
<dbReference type="OMA" id="HHKTSHG"/>
<dbReference type="OrthoDB" id="689701at2759"/>
<dbReference type="GO" id="GO:0005886">
    <property type="term" value="C:plasma membrane"/>
    <property type="evidence" value="ECO:0007669"/>
    <property type="project" value="UniProtKB-SubCell"/>
</dbReference>
<dbReference type="InterPro" id="IPR006459">
    <property type="entry name" value="CASP/CASPL"/>
</dbReference>
<dbReference type="InterPro" id="IPR006702">
    <property type="entry name" value="CASP_dom"/>
</dbReference>
<dbReference type="NCBIfam" id="TIGR01569">
    <property type="entry name" value="A_tha_TIGR01569"/>
    <property type="match status" value="1"/>
</dbReference>
<dbReference type="PANTHER" id="PTHR33573:SF30">
    <property type="entry name" value="CASP-LIKE PROTEIN 2C1-RELATED"/>
    <property type="match status" value="1"/>
</dbReference>
<dbReference type="PANTHER" id="PTHR33573">
    <property type="entry name" value="CASP-LIKE PROTEIN 4A4"/>
    <property type="match status" value="1"/>
</dbReference>
<dbReference type="Pfam" id="PF04535">
    <property type="entry name" value="CASP_dom"/>
    <property type="match status" value="1"/>
</dbReference>
<proteinExistence type="evidence at transcript level"/>
<organism>
    <name type="scientific">Marchantia polymorpha</name>
    <name type="common">Common liverwort</name>
    <name type="synonym">Marchantia aquatica</name>
    <dbReference type="NCBI Taxonomy" id="3197"/>
    <lineage>
        <taxon>Eukaryota</taxon>
        <taxon>Viridiplantae</taxon>
        <taxon>Streptophyta</taxon>
        <taxon>Embryophyta</taxon>
        <taxon>Marchantiophyta</taxon>
        <taxon>Marchantiopsida</taxon>
        <taxon>Marchantiidae</taxon>
        <taxon>Marchantiales</taxon>
        <taxon>Marchantiaceae</taxon>
        <taxon>Marchantia</taxon>
    </lineage>
</organism>
<comment type="subunit">
    <text evidence="1">Homodimer and heterodimers.</text>
</comment>
<comment type="subcellular location">
    <subcellularLocation>
        <location evidence="1">Cell membrane</location>
        <topology evidence="1">Multi-pass membrane protein</topology>
    </subcellularLocation>
</comment>
<comment type="similarity">
    <text evidence="4">Belongs to the Casparian strip membrane proteins (CASP) family.</text>
</comment>
<name>CSPL1_MARPO</name>
<protein>
    <recommendedName>
        <fullName>CASP-like protein 2U1</fullName>
        <shortName>MpCASPL2U1</shortName>
    </recommendedName>
</protein>
<feature type="chain" id="PRO_0000412206" description="CASP-like protein 2U1">
    <location>
        <begin position="1"/>
        <end position="216"/>
    </location>
</feature>
<feature type="topological domain" description="Cytoplasmic" evidence="2">
    <location>
        <begin position="1"/>
        <end position="37"/>
    </location>
</feature>
<feature type="transmembrane region" description="Helical" evidence="2">
    <location>
        <begin position="38"/>
        <end position="58"/>
    </location>
</feature>
<feature type="topological domain" description="Extracellular" evidence="2">
    <location>
        <begin position="59"/>
        <end position="86"/>
    </location>
</feature>
<feature type="transmembrane region" description="Helical" evidence="2">
    <location>
        <begin position="87"/>
        <end position="107"/>
    </location>
</feature>
<feature type="topological domain" description="Cytoplasmic" evidence="2">
    <location>
        <begin position="108"/>
        <end position="128"/>
    </location>
</feature>
<feature type="transmembrane region" description="Helical" evidence="2">
    <location>
        <begin position="129"/>
        <end position="148"/>
    </location>
</feature>
<feature type="topological domain" description="Extracellular" evidence="2">
    <location>
        <begin position="149"/>
        <end position="170"/>
    </location>
</feature>
<feature type="transmembrane region" description="Helical" evidence="2">
    <location>
        <begin position="171"/>
        <end position="191"/>
    </location>
</feature>
<feature type="topological domain" description="Cytoplasmic" evidence="2">
    <location>
        <begin position="192"/>
        <end position="216"/>
    </location>
</feature>
<feature type="region of interest" description="Disordered" evidence="3">
    <location>
        <begin position="1"/>
        <end position="30"/>
    </location>
</feature>